<proteinExistence type="inferred from homology"/>
<reference key="1">
    <citation type="submission" date="2006-12" db="EMBL/GenBank/DDBJ databases">
        <title>Complete sequence of Acidovorax avenae subsp. citrulli AAC00-1.</title>
        <authorList>
            <person name="Copeland A."/>
            <person name="Lucas S."/>
            <person name="Lapidus A."/>
            <person name="Barry K."/>
            <person name="Detter J.C."/>
            <person name="Glavina del Rio T."/>
            <person name="Dalin E."/>
            <person name="Tice H."/>
            <person name="Pitluck S."/>
            <person name="Kiss H."/>
            <person name="Brettin T."/>
            <person name="Bruce D."/>
            <person name="Han C."/>
            <person name="Tapia R."/>
            <person name="Gilna P."/>
            <person name="Schmutz J."/>
            <person name="Larimer F."/>
            <person name="Land M."/>
            <person name="Hauser L."/>
            <person name="Kyrpides N."/>
            <person name="Kim E."/>
            <person name="Stahl D."/>
            <person name="Richardson P."/>
        </authorList>
    </citation>
    <scope>NUCLEOTIDE SEQUENCE [LARGE SCALE GENOMIC DNA]</scope>
    <source>
        <strain>AAC00-1</strain>
    </source>
</reference>
<dbReference type="EC" id="3.6.5.n1" evidence="1"/>
<dbReference type="EMBL" id="CP000512">
    <property type="protein sequence ID" value="ABM31785.1"/>
    <property type="molecule type" value="Genomic_DNA"/>
</dbReference>
<dbReference type="RefSeq" id="WP_011794337.1">
    <property type="nucleotide sequence ID" value="NC_008752.1"/>
</dbReference>
<dbReference type="SMR" id="A1TLE7"/>
<dbReference type="STRING" id="397945.Aave_1193"/>
<dbReference type="GeneID" id="79790852"/>
<dbReference type="KEGG" id="aav:Aave_1193"/>
<dbReference type="eggNOG" id="COG0481">
    <property type="taxonomic scope" value="Bacteria"/>
</dbReference>
<dbReference type="HOGENOM" id="CLU_009995_3_3_4"/>
<dbReference type="OrthoDB" id="9801472at2"/>
<dbReference type="Proteomes" id="UP000002596">
    <property type="component" value="Chromosome"/>
</dbReference>
<dbReference type="GO" id="GO:0005886">
    <property type="term" value="C:plasma membrane"/>
    <property type="evidence" value="ECO:0007669"/>
    <property type="project" value="UniProtKB-SubCell"/>
</dbReference>
<dbReference type="GO" id="GO:0005525">
    <property type="term" value="F:GTP binding"/>
    <property type="evidence" value="ECO:0007669"/>
    <property type="project" value="UniProtKB-UniRule"/>
</dbReference>
<dbReference type="GO" id="GO:0003924">
    <property type="term" value="F:GTPase activity"/>
    <property type="evidence" value="ECO:0007669"/>
    <property type="project" value="UniProtKB-UniRule"/>
</dbReference>
<dbReference type="GO" id="GO:0043022">
    <property type="term" value="F:ribosome binding"/>
    <property type="evidence" value="ECO:0007669"/>
    <property type="project" value="UniProtKB-UniRule"/>
</dbReference>
<dbReference type="GO" id="GO:0003746">
    <property type="term" value="F:translation elongation factor activity"/>
    <property type="evidence" value="ECO:0007669"/>
    <property type="project" value="UniProtKB-UniRule"/>
</dbReference>
<dbReference type="GO" id="GO:0045727">
    <property type="term" value="P:positive regulation of translation"/>
    <property type="evidence" value="ECO:0007669"/>
    <property type="project" value="UniProtKB-UniRule"/>
</dbReference>
<dbReference type="CDD" id="cd16260">
    <property type="entry name" value="EF4_III"/>
    <property type="match status" value="1"/>
</dbReference>
<dbReference type="CDD" id="cd01890">
    <property type="entry name" value="LepA"/>
    <property type="match status" value="1"/>
</dbReference>
<dbReference type="CDD" id="cd03709">
    <property type="entry name" value="lepA_C"/>
    <property type="match status" value="1"/>
</dbReference>
<dbReference type="FunFam" id="3.40.50.300:FF:000078">
    <property type="entry name" value="Elongation factor 4"/>
    <property type="match status" value="1"/>
</dbReference>
<dbReference type="FunFam" id="2.40.30.10:FF:000015">
    <property type="entry name" value="Translation factor GUF1, mitochondrial"/>
    <property type="match status" value="1"/>
</dbReference>
<dbReference type="FunFam" id="3.30.70.240:FF:000007">
    <property type="entry name" value="Translation factor GUF1, mitochondrial"/>
    <property type="match status" value="1"/>
</dbReference>
<dbReference type="FunFam" id="3.30.70.2570:FF:000001">
    <property type="entry name" value="Translation factor GUF1, mitochondrial"/>
    <property type="match status" value="1"/>
</dbReference>
<dbReference type="FunFam" id="3.30.70.870:FF:000004">
    <property type="entry name" value="Translation factor GUF1, mitochondrial"/>
    <property type="match status" value="1"/>
</dbReference>
<dbReference type="Gene3D" id="3.30.70.240">
    <property type="match status" value="1"/>
</dbReference>
<dbReference type="Gene3D" id="3.30.70.2570">
    <property type="entry name" value="Elongation factor 4, C-terminal domain"/>
    <property type="match status" value="1"/>
</dbReference>
<dbReference type="Gene3D" id="3.30.70.870">
    <property type="entry name" value="Elongation Factor G (Translational Gtpase), domain 3"/>
    <property type="match status" value="1"/>
</dbReference>
<dbReference type="Gene3D" id="3.40.50.300">
    <property type="entry name" value="P-loop containing nucleotide triphosphate hydrolases"/>
    <property type="match status" value="1"/>
</dbReference>
<dbReference type="Gene3D" id="2.40.30.10">
    <property type="entry name" value="Translation factors"/>
    <property type="match status" value="1"/>
</dbReference>
<dbReference type="HAMAP" id="MF_00071">
    <property type="entry name" value="LepA"/>
    <property type="match status" value="1"/>
</dbReference>
<dbReference type="InterPro" id="IPR006297">
    <property type="entry name" value="EF-4"/>
</dbReference>
<dbReference type="InterPro" id="IPR035647">
    <property type="entry name" value="EFG_III/V"/>
</dbReference>
<dbReference type="InterPro" id="IPR000640">
    <property type="entry name" value="EFG_V-like"/>
</dbReference>
<dbReference type="InterPro" id="IPR031157">
    <property type="entry name" value="G_TR_CS"/>
</dbReference>
<dbReference type="InterPro" id="IPR038363">
    <property type="entry name" value="LepA_C_sf"/>
</dbReference>
<dbReference type="InterPro" id="IPR013842">
    <property type="entry name" value="LepA_CTD"/>
</dbReference>
<dbReference type="InterPro" id="IPR035654">
    <property type="entry name" value="LepA_IV"/>
</dbReference>
<dbReference type="InterPro" id="IPR027417">
    <property type="entry name" value="P-loop_NTPase"/>
</dbReference>
<dbReference type="InterPro" id="IPR005225">
    <property type="entry name" value="Small_GTP-bd"/>
</dbReference>
<dbReference type="InterPro" id="IPR000795">
    <property type="entry name" value="T_Tr_GTP-bd_dom"/>
</dbReference>
<dbReference type="InterPro" id="IPR009000">
    <property type="entry name" value="Transl_B-barrel_sf"/>
</dbReference>
<dbReference type="NCBIfam" id="TIGR01393">
    <property type="entry name" value="lepA"/>
    <property type="match status" value="1"/>
</dbReference>
<dbReference type="NCBIfam" id="TIGR00231">
    <property type="entry name" value="small_GTP"/>
    <property type="match status" value="1"/>
</dbReference>
<dbReference type="PANTHER" id="PTHR43512:SF4">
    <property type="entry name" value="TRANSLATION FACTOR GUF1 HOMOLOG, CHLOROPLASTIC"/>
    <property type="match status" value="1"/>
</dbReference>
<dbReference type="PANTHER" id="PTHR43512">
    <property type="entry name" value="TRANSLATION FACTOR GUF1-RELATED"/>
    <property type="match status" value="1"/>
</dbReference>
<dbReference type="Pfam" id="PF00679">
    <property type="entry name" value="EFG_C"/>
    <property type="match status" value="1"/>
</dbReference>
<dbReference type="Pfam" id="PF00009">
    <property type="entry name" value="GTP_EFTU"/>
    <property type="match status" value="1"/>
</dbReference>
<dbReference type="Pfam" id="PF06421">
    <property type="entry name" value="LepA_C"/>
    <property type="match status" value="1"/>
</dbReference>
<dbReference type="PRINTS" id="PR00315">
    <property type="entry name" value="ELONGATNFCT"/>
</dbReference>
<dbReference type="SMART" id="SM00838">
    <property type="entry name" value="EFG_C"/>
    <property type="match status" value="1"/>
</dbReference>
<dbReference type="SUPFAM" id="SSF54980">
    <property type="entry name" value="EF-G C-terminal domain-like"/>
    <property type="match status" value="2"/>
</dbReference>
<dbReference type="SUPFAM" id="SSF52540">
    <property type="entry name" value="P-loop containing nucleoside triphosphate hydrolases"/>
    <property type="match status" value="1"/>
</dbReference>
<dbReference type="SUPFAM" id="SSF50447">
    <property type="entry name" value="Translation proteins"/>
    <property type="match status" value="1"/>
</dbReference>
<dbReference type="PROSITE" id="PS00301">
    <property type="entry name" value="G_TR_1"/>
    <property type="match status" value="1"/>
</dbReference>
<dbReference type="PROSITE" id="PS51722">
    <property type="entry name" value="G_TR_2"/>
    <property type="match status" value="1"/>
</dbReference>
<organism>
    <name type="scientific">Paracidovorax citrulli (strain AAC00-1)</name>
    <name type="common">Acidovorax citrulli</name>
    <dbReference type="NCBI Taxonomy" id="397945"/>
    <lineage>
        <taxon>Bacteria</taxon>
        <taxon>Pseudomonadati</taxon>
        <taxon>Pseudomonadota</taxon>
        <taxon>Betaproteobacteria</taxon>
        <taxon>Burkholderiales</taxon>
        <taxon>Comamonadaceae</taxon>
        <taxon>Paracidovorax</taxon>
    </lineage>
</organism>
<feature type="chain" id="PRO_1000031958" description="Elongation factor 4">
    <location>
        <begin position="1"/>
        <end position="602"/>
    </location>
</feature>
<feature type="domain" description="tr-type G">
    <location>
        <begin position="2"/>
        <end position="184"/>
    </location>
</feature>
<feature type="binding site" evidence="1">
    <location>
        <begin position="14"/>
        <end position="19"/>
    </location>
    <ligand>
        <name>GTP</name>
        <dbReference type="ChEBI" id="CHEBI:37565"/>
    </ligand>
</feature>
<feature type="binding site" evidence="1">
    <location>
        <begin position="131"/>
        <end position="134"/>
    </location>
    <ligand>
        <name>GTP</name>
        <dbReference type="ChEBI" id="CHEBI:37565"/>
    </ligand>
</feature>
<keyword id="KW-0997">Cell inner membrane</keyword>
<keyword id="KW-1003">Cell membrane</keyword>
<keyword id="KW-0342">GTP-binding</keyword>
<keyword id="KW-0378">Hydrolase</keyword>
<keyword id="KW-0472">Membrane</keyword>
<keyword id="KW-0547">Nucleotide-binding</keyword>
<keyword id="KW-0648">Protein biosynthesis</keyword>
<comment type="function">
    <text evidence="1">Required for accurate and efficient protein synthesis under certain stress conditions. May act as a fidelity factor of the translation reaction, by catalyzing a one-codon backward translocation of tRNAs on improperly translocated ribosomes. Back-translocation proceeds from a post-translocation (POST) complex to a pre-translocation (PRE) complex, thus giving elongation factor G a second chance to translocate the tRNAs correctly. Binds to ribosomes in a GTP-dependent manner.</text>
</comment>
<comment type="catalytic activity">
    <reaction evidence="1">
        <text>GTP + H2O = GDP + phosphate + H(+)</text>
        <dbReference type="Rhea" id="RHEA:19669"/>
        <dbReference type="ChEBI" id="CHEBI:15377"/>
        <dbReference type="ChEBI" id="CHEBI:15378"/>
        <dbReference type="ChEBI" id="CHEBI:37565"/>
        <dbReference type="ChEBI" id="CHEBI:43474"/>
        <dbReference type="ChEBI" id="CHEBI:58189"/>
        <dbReference type="EC" id="3.6.5.n1"/>
    </reaction>
</comment>
<comment type="subcellular location">
    <subcellularLocation>
        <location evidence="1">Cell inner membrane</location>
        <topology evidence="1">Peripheral membrane protein</topology>
        <orientation evidence="1">Cytoplasmic side</orientation>
    </subcellularLocation>
</comment>
<comment type="similarity">
    <text evidence="1">Belongs to the TRAFAC class translation factor GTPase superfamily. Classic translation factor GTPase family. LepA subfamily.</text>
</comment>
<accession>A1TLE7</accession>
<protein>
    <recommendedName>
        <fullName evidence="1">Elongation factor 4</fullName>
        <shortName evidence="1">EF-4</shortName>
        <ecNumber evidence="1">3.6.5.n1</ecNumber>
    </recommendedName>
    <alternativeName>
        <fullName evidence="1">Ribosomal back-translocase LepA</fullName>
    </alternativeName>
</protein>
<evidence type="ECO:0000255" key="1">
    <source>
        <dbReference type="HAMAP-Rule" id="MF_00071"/>
    </source>
</evidence>
<sequence length="602" mass="66503">MNHIRNFSIIAHIDHGKSTLADRLIQRCGGLEERQMEAQVLDSMDIEKERGITIKAQTAALQYKARDGQVYNLNLIDTPGHVDFSYEVSRSLSACEGALLVVDASQGVEAQTVANCYTALDLGVEVLPVLNKMDLPQADPDNAKAEIEDVIGIDATDAIPCSAKTGMGIDEILELIVAKVPAPRGNPDAPLRAMIIDSWFDPYVGVVMLVRVVDGRLLKGERFKMMASGAAYNADNLGVFTPANEPRNALNAGEVGYIIAGIKELKAAKVGDTITLEKKLPNNLGPAEQALPGFKEIQPQVFAGLYPTEASEYDQLRDALEKLQLNDASLHFEPEVSQALGFGFRCGFLGLLHMEIVQERLEREFDQDLITTAPSVVYEVVKGDGEVIMVENPSKMPDQGRIQEIREPIVTVHLYMPQEYVGPVMTLANQKRGVQLNMAYHGRQVMLTYELPLGEIVLDFFDKLKSVSRGYASMDYEFKEYRASDVVKVDILLNGEKVDALSIIVHRSQSAYRGRAVAAKMREIISRQMFDVAIQAAIGANIIARETIKALRKNVLAKCYGGDITRKRKLLEKQKAGKKRMKQIGSVEVPQEAFLAILQVEE</sequence>
<name>LEPA_PARC0</name>
<gene>
    <name evidence="1" type="primary">lepA</name>
    <name type="ordered locus">Aave_1193</name>
</gene>